<keyword id="KW-0010">Activator</keyword>
<keyword id="KW-0183">Conidiation</keyword>
<keyword id="KW-0539">Nucleus</keyword>
<keyword id="KW-0749">Sporulation</keyword>
<keyword id="KW-0804">Transcription</keyword>
<keyword id="KW-0805">Transcription regulation</keyword>
<evidence type="ECO:0000255" key="1">
    <source>
        <dbReference type="PROSITE-ProRule" id="PRU00505"/>
    </source>
</evidence>
<evidence type="ECO:0000256" key="2">
    <source>
        <dbReference type="SAM" id="MobiDB-lite"/>
    </source>
</evidence>
<evidence type="ECO:0000269" key="3">
    <source>
    </source>
</evidence>
<evidence type="ECO:0000303" key="4">
    <source>
    </source>
</evidence>
<evidence type="ECO:0000305" key="5"/>
<name>ABAA_METRA</name>
<accession>E9EMI7</accession>
<organism>
    <name type="scientific">Metarhizium robertsii (strain ARSEF 23 / ATCC MYA-3075)</name>
    <name type="common">Metarhizium anisopliae (strain ARSEF 23)</name>
    <dbReference type="NCBI Taxonomy" id="655844"/>
    <lineage>
        <taxon>Eukaryota</taxon>
        <taxon>Fungi</taxon>
        <taxon>Dikarya</taxon>
        <taxon>Ascomycota</taxon>
        <taxon>Pezizomycotina</taxon>
        <taxon>Sordariomycetes</taxon>
        <taxon>Hypocreomycetidae</taxon>
        <taxon>Hypocreales</taxon>
        <taxon>Clavicipitaceae</taxon>
        <taxon>Metarhizium</taxon>
    </lineage>
</organism>
<gene>
    <name evidence="4" type="primary">AbaA</name>
    <name type="ORF">MAA_00694</name>
</gene>
<feature type="chain" id="PRO_0000445756" description="Conidiophore development regulator abaA">
    <location>
        <begin position="1"/>
        <end position="885"/>
    </location>
</feature>
<feature type="DNA-binding region" description="TEA" evidence="1">
    <location>
        <begin position="124"/>
        <end position="217"/>
    </location>
</feature>
<feature type="region of interest" description="Disordered" evidence="2">
    <location>
        <begin position="1"/>
        <end position="25"/>
    </location>
</feature>
<feature type="region of interest" description="Disordered" evidence="2">
    <location>
        <begin position="502"/>
        <end position="539"/>
    </location>
</feature>
<feature type="region of interest" description="Disordered" evidence="2">
    <location>
        <begin position="817"/>
        <end position="885"/>
    </location>
</feature>
<feature type="compositionally biased region" description="Polar residues" evidence="2">
    <location>
        <begin position="1"/>
        <end position="20"/>
    </location>
</feature>
<feature type="compositionally biased region" description="Basic and acidic residues" evidence="2">
    <location>
        <begin position="508"/>
        <end position="521"/>
    </location>
</feature>
<feature type="compositionally biased region" description="Basic and acidic residues" evidence="2">
    <location>
        <begin position="831"/>
        <end position="840"/>
    </location>
</feature>
<dbReference type="EMBL" id="ADNJ02000007">
    <property type="protein sequence ID" value="EFZ03620.2"/>
    <property type="molecule type" value="Genomic_DNA"/>
</dbReference>
<dbReference type="RefSeq" id="XP_007816883.2">
    <property type="nucleotide sequence ID" value="XM_007818692.2"/>
</dbReference>
<dbReference type="GeneID" id="19254980"/>
<dbReference type="KEGG" id="maj:MAA_00694"/>
<dbReference type="HOGENOM" id="CLU_009126_0_0_1"/>
<dbReference type="OrthoDB" id="10006572at2759"/>
<dbReference type="Proteomes" id="UP000002498">
    <property type="component" value="Unassembled WGS sequence"/>
</dbReference>
<dbReference type="GO" id="GO:0005634">
    <property type="term" value="C:nucleus"/>
    <property type="evidence" value="ECO:0007669"/>
    <property type="project" value="UniProtKB-SubCell"/>
</dbReference>
<dbReference type="GO" id="GO:0005667">
    <property type="term" value="C:transcription regulator complex"/>
    <property type="evidence" value="ECO:0007669"/>
    <property type="project" value="TreeGrafter"/>
</dbReference>
<dbReference type="GO" id="GO:0000981">
    <property type="term" value="F:DNA-binding transcription factor activity, RNA polymerase II-specific"/>
    <property type="evidence" value="ECO:0007669"/>
    <property type="project" value="TreeGrafter"/>
</dbReference>
<dbReference type="GO" id="GO:0000978">
    <property type="term" value="F:RNA polymerase II cis-regulatory region sequence-specific DNA binding"/>
    <property type="evidence" value="ECO:0007669"/>
    <property type="project" value="TreeGrafter"/>
</dbReference>
<dbReference type="GO" id="GO:0048315">
    <property type="term" value="P:conidium formation"/>
    <property type="evidence" value="ECO:0007669"/>
    <property type="project" value="UniProtKB-KW"/>
</dbReference>
<dbReference type="GO" id="GO:0030435">
    <property type="term" value="P:sporulation resulting in formation of a cellular spore"/>
    <property type="evidence" value="ECO:0007669"/>
    <property type="project" value="UniProtKB-KW"/>
</dbReference>
<dbReference type="Gene3D" id="6.10.20.40">
    <property type="entry name" value="TEA/ATTS domain"/>
    <property type="match status" value="1"/>
</dbReference>
<dbReference type="InterPro" id="IPR000818">
    <property type="entry name" value="TEA/ATTS_dom"/>
</dbReference>
<dbReference type="InterPro" id="IPR038096">
    <property type="entry name" value="TEA/ATTS_sf"/>
</dbReference>
<dbReference type="InterPro" id="IPR050937">
    <property type="entry name" value="TEC1_TEAD_TF"/>
</dbReference>
<dbReference type="PANTHER" id="PTHR11834:SF0">
    <property type="entry name" value="PROTEIN SCALLOPED"/>
    <property type="match status" value="1"/>
</dbReference>
<dbReference type="PANTHER" id="PTHR11834">
    <property type="entry name" value="TRANSCRIPTIONAL ENHANCER FACTOR TEF RELATED"/>
    <property type="match status" value="1"/>
</dbReference>
<dbReference type="Pfam" id="PF01285">
    <property type="entry name" value="TEA"/>
    <property type="match status" value="1"/>
</dbReference>
<dbReference type="SMART" id="SM00426">
    <property type="entry name" value="TEA"/>
    <property type="match status" value="1"/>
</dbReference>
<dbReference type="PROSITE" id="PS51088">
    <property type="entry name" value="TEA_2"/>
    <property type="match status" value="1"/>
</dbReference>
<sequence>MSSLFQPRPVLSSQRYSQSPDYVDTRRSIHNGRLPLRESTGNAQSHSFNGLVSCYQNQVALAPSMQTTIPAPMVPSQSLDCLYRVPTPRQQARFQRRPKTSVNPLYFWPAFRQYRNRQAHKDTQKDKGGVWRRPELEDAFVDSVLLMPHMGRRKFSMGGKLHGRNMLISEYIFVICIALLGSKEIFRIDNSNESIEQMGRKQVSSHMQVVKKFFEDLRCFHFLFPSEEKKEPGSTNSDDCYDEEEQESFKSNPVLTALAEGRVPDVKPNYEYFSQLLALQSSICTRPKTCEIFVSSSDIKIRDDVAYDVHDTPLDQASFPHLNKYTNCDDSPNVLGKDVLLHEYTRSLDRTTSACAKSVTRRWQHDAPAMYETLELPSRDEECLLLEMCATLELHEHAKFPSGSELTGFVEVAITQPALQNHRWKCITRLTRPAELHSDEGKHGVYTNDSGIHRRGCSDSKAECECHTRPRQDIHVPFPAVEWASILSMAVQYPDVEHQRLKEKRRKYADGDGKKELERAGSKRKRSEDEGDAASWTRREPTGSDLICKVAMYQELWSCAPDSTQWTRQAIIFWRFNTTNQWHKYNPVFKPAGTTWRWLTINDPMSRYHQQKALVYPTANVSRDALMSPTPTIHQHLTAAMNETFNSWDQGSSAPHVPHVPPLQTPNNSIGLFDSFSNGLATPPPTATLPPAYPTGNFDSRSGSFDARSASFDTRSGSFDGNLGPNNGVAFLPTTGPPPQHERQPTALGNNNQPFFDGQQSFSEVKPINTAVNSYMTASTSLELPNQLVYDNSGVDTSNMQGWDMSALDGWSAAASAPGSATAEWGPNTKVESHAGDHHGAMWAPPHWPLSAGAAPSSHERGASPRPLKRRRETMDVHVPVTAGW</sequence>
<protein>
    <recommendedName>
        <fullName evidence="4">Conidiophore development regulator abaA</fullName>
    </recommendedName>
</protein>
<comment type="function">
    <text evidence="3">BrlA, abaA and wetA are pivotal regulators of conidiophore development and conidium maturation. They act individually and together to regulate their own expression and that of numerous other sporulation-specific genes (PubMed:29958281). BrlA, abaA and wetA act together to positively regulate the expression of the Pks1 gene cluster that mediates the biosynthesis of an anthraquinone derivative pigment that contributes to conidial pigmentation that provides protection from UV radiation, heat and cold stress (PubMed:29958281).</text>
</comment>
<comment type="subcellular location">
    <subcellularLocation>
        <location evidence="5">Nucleus</location>
    </subcellularLocation>
</comment>
<comment type="induction">
    <text evidence="3">Expression increases significantly during initiation of conidiation and remains elevated until colourisation is stabilized (PubMed:29958281). Expression is positively regulated by BrlA (PubMed:29958281).</text>
</comment>
<comment type="disruption phenotype">
    <text evidence="3">Produces phialides on which short deformed hypha are formed.</text>
</comment>
<comment type="similarity">
    <text evidence="5">Belongs to the TEC1 family.</text>
</comment>
<proteinExistence type="evidence at transcript level"/>
<reference key="1">
    <citation type="journal article" date="2011" name="PLoS Genet.">
        <title>Genome sequencing and comparative transcriptomics of the model entomopathogenic fungi Metarhizium anisopliae and M. acridum.</title>
        <authorList>
            <person name="Gao Q."/>
            <person name="Jin K."/>
            <person name="Ying S.-H."/>
            <person name="Zhang Y."/>
            <person name="Xiao G."/>
            <person name="Shang Y."/>
            <person name="Duan Z."/>
            <person name="Hu X."/>
            <person name="Xie X.-Q."/>
            <person name="Zhou G."/>
            <person name="Peng G."/>
            <person name="Luo Z."/>
            <person name="Huang W."/>
            <person name="Wang B."/>
            <person name="Fang W."/>
            <person name="Wang S."/>
            <person name="Zhong Y."/>
            <person name="Ma L.-J."/>
            <person name="St Leger R.J."/>
            <person name="Zhao G.-P."/>
            <person name="Pei Y."/>
            <person name="Feng M.-G."/>
            <person name="Xia Y."/>
            <person name="Wang C."/>
        </authorList>
    </citation>
    <scope>NUCLEOTIDE SEQUENCE [LARGE SCALE GENOMIC DNA]</scope>
    <source>
        <strain>ARSEF 23 / ATCC MYA-3075</strain>
    </source>
</reference>
<reference key="2">
    <citation type="journal article" date="2014" name="Proc. Natl. Acad. Sci. U.S.A.">
        <title>Trajectory and genomic determinants of fungal-pathogen speciation and host adaptation.</title>
        <authorList>
            <person name="Hu X."/>
            <person name="Xiao G."/>
            <person name="Zheng P."/>
            <person name="Shang Y."/>
            <person name="Su Y."/>
            <person name="Zhang X."/>
            <person name="Liu X."/>
            <person name="Zhan S."/>
            <person name="St Leger R.J."/>
            <person name="Wang C."/>
        </authorList>
    </citation>
    <scope>GENOME REANNOTATION</scope>
    <source>
        <strain>ARSEF 23 / ATCC MYA-3075</strain>
    </source>
</reference>
<reference key="3">
    <citation type="journal article" date="2018" name="PLoS Genet.">
        <title>Duplication of a Pks gene cluster and subsequent functional diversification facilitate environmental adaptation in Metarhizium species.</title>
        <authorList>
            <person name="Zeng G."/>
            <person name="Zhang P."/>
            <person name="Zhang Q."/>
            <person name="Zhao H."/>
            <person name="Li Z."/>
            <person name="Zhang X."/>
            <person name="Wang C."/>
            <person name="Yin W.B."/>
            <person name="Fang W."/>
        </authorList>
    </citation>
    <scope>IDENTIFICATION</scope>
    <scope>DISRUPTION PHENOTYPE</scope>
    <scope>FUNCTION</scope>
    <scope>INDUCTION</scope>
</reference>